<sequence length="588" mass="62946">MKLKYLVSAMALVVLSSGTAMAKTPDMGSFHADMGSCQSCHAKPIKVTDSETHENAQCKSCHGEYAELANDKLQFDPHNSHLGDINCTSCHKGHEEPKFYCNECHSFDIKPMPFSDAKKKKSWDDGWDQDKIQKAIAAGPSETTQVLVVGAGSAGFNASLAAKKAGANVILVDKAPFSGGNSMISAGGMNAVGTKQQTAHGVEDKVEWFIEDAMKGGRQQNDIKLVTILAEQSADGVQWLESLGANLDDLKRSGGARVDRTHRPHGGKSSGPEIIDTLRKAAKEQGIDTRLNSRVVKLVVNDDHSVVGAVVHGKHTGYYMIGAKSVVLATGGYGMNKEMIAYYRPTMKDMTSSNNITATGDGVLMAKEIGASMTDIDWVQAHPTVGKDSRILISETVRGVGAVMVNKDGNRFISELTTRDKASDAILKQPGQFAWIIFDNQLYKKAKMVRGYDHLEMLYKGDTVEQLAKSTGMKVADLAKTVSDYNGYVASGKDTAFGRADMPLNMTQSPYYAVKVAPGIHHTMGGVAINTTASVLDLQSKPIDGLFAAGEVTGGVHGYNRLGGNAIADTVVFGRIAGDNAAKHALDK</sequence>
<gene>
    <name evidence="5" type="primary">ifcA</name>
    <name type="ordered locus">Sfri_2586</name>
</gene>
<keyword id="KW-0002">3D-structure</keyword>
<keyword id="KW-0903">Direct protein sequencing</keyword>
<keyword id="KW-0249">Electron transport</keyword>
<keyword id="KW-0274">FAD</keyword>
<keyword id="KW-0285">Flavoprotein</keyword>
<keyword id="KW-0349">Heme</keyword>
<keyword id="KW-0408">Iron</keyword>
<keyword id="KW-0479">Metal-binding</keyword>
<keyword id="KW-0560">Oxidoreductase</keyword>
<keyword id="KW-0574">Periplasm</keyword>
<keyword id="KW-1185">Reference proteome</keyword>
<keyword id="KW-0732">Signal</keyword>
<keyword id="KW-0813">Transport</keyword>
<protein>
    <recommendedName>
        <fullName evidence="6">Probable fumarate reductase Ifc3</fullName>
        <ecNumber evidence="7">1.3.2.-</ecNumber>
    </recommendedName>
    <alternativeName>
        <fullName>Fe(3+)-induced flavocytochrome C3</fullName>
    </alternativeName>
    <alternativeName>
        <fullName evidence="5">Iron-induced flavocytochrome C3</fullName>
        <shortName evidence="5">Ifc3</shortName>
    </alternativeName>
</protein>
<name>IFCA_SHEFN</name>
<feature type="signal peptide" evidence="3">
    <location>
        <begin position="1"/>
        <end position="22"/>
    </location>
</feature>
<feature type="chain" id="PRO_0000010346" description="Probable fumarate reductase Ifc3">
    <location>
        <begin position="23"/>
        <end position="588"/>
    </location>
</feature>
<feature type="region of interest" description="Flavoprotein-like">
    <location>
        <begin position="135"/>
        <end position="588"/>
    </location>
</feature>
<feature type="active site" description="Proton donor" evidence="1">
    <location>
        <position position="419"/>
    </location>
</feature>
<feature type="binding site" description="axial binding residue" evidence="4 8">
    <location>
        <position position="31"/>
    </location>
    <ligand>
        <name>heme c</name>
        <dbReference type="ChEBI" id="CHEBI:61717"/>
        <label>2</label>
    </ligand>
    <ligandPart>
        <name>Fe</name>
        <dbReference type="ChEBI" id="CHEBI:18248"/>
    </ligandPart>
</feature>
<feature type="binding site" description="covalent" evidence="2">
    <location>
        <position position="37"/>
    </location>
    <ligand>
        <name>heme c</name>
        <dbReference type="ChEBI" id="CHEBI:61717"/>
        <label>1</label>
    </ligand>
</feature>
<feature type="binding site" description="covalent" evidence="2">
    <location>
        <position position="40"/>
    </location>
    <ligand>
        <name>heme c</name>
        <dbReference type="ChEBI" id="CHEBI:61717"/>
        <label>1</label>
    </ligand>
</feature>
<feature type="binding site" description="axial binding residue" evidence="4 8">
    <location>
        <position position="41"/>
    </location>
    <ligand>
        <name>heme c</name>
        <dbReference type="ChEBI" id="CHEBI:61717"/>
        <label>1</label>
    </ligand>
    <ligandPart>
        <name>Fe</name>
        <dbReference type="ChEBI" id="CHEBI:18248"/>
    </ligandPart>
</feature>
<feature type="binding site" description="covalent" evidence="2">
    <location>
        <position position="58"/>
    </location>
    <ligand>
        <name>heme c</name>
        <dbReference type="ChEBI" id="CHEBI:61717"/>
        <label>2</label>
    </ligand>
</feature>
<feature type="binding site" description="covalent" evidence="2">
    <location>
        <position position="61"/>
    </location>
    <ligand>
        <name>heme c</name>
        <dbReference type="ChEBI" id="CHEBI:61717"/>
        <label>2</label>
    </ligand>
</feature>
<feature type="binding site" description="axial binding residue" evidence="4 8">
    <location>
        <position position="62"/>
    </location>
    <ligand>
        <name>heme c</name>
        <dbReference type="ChEBI" id="CHEBI:61717"/>
        <label>2</label>
    </ligand>
    <ligandPart>
        <name>Fe</name>
        <dbReference type="ChEBI" id="CHEBI:18248"/>
    </ligandPart>
</feature>
<feature type="binding site" description="axial binding residue" evidence="4 8">
    <location>
        <position position="78"/>
    </location>
    <ligand>
        <name>heme c</name>
        <dbReference type="ChEBI" id="CHEBI:61717"/>
        <label>3</label>
    </ligand>
    <ligandPart>
        <name>Fe</name>
        <dbReference type="ChEBI" id="CHEBI:18248"/>
    </ligandPart>
</feature>
<feature type="binding site" description="axial binding residue" evidence="4 8">
    <location>
        <position position="81"/>
    </location>
    <ligand>
        <name>heme c</name>
        <dbReference type="ChEBI" id="CHEBI:61717"/>
        <label>4</label>
    </ligand>
    <ligandPart>
        <name>Fe</name>
        <dbReference type="ChEBI" id="CHEBI:18248"/>
    </ligandPart>
</feature>
<feature type="binding site" description="covalent" evidence="2">
    <location>
        <position position="87"/>
    </location>
    <ligand>
        <name>heme c</name>
        <dbReference type="ChEBI" id="CHEBI:61717"/>
        <label>3</label>
    </ligand>
</feature>
<feature type="binding site" description="covalent" evidence="2">
    <location>
        <position position="90"/>
    </location>
    <ligand>
        <name>heme c</name>
        <dbReference type="ChEBI" id="CHEBI:61717"/>
        <label>3</label>
    </ligand>
</feature>
<feature type="binding site" description="axial binding residue" evidence="4 8">
    <location>
        <position position="91"/>
    </location>
    <ligand>
        <name>heme c</name>
        <dbReference type="ChEBI" id="CHEBI:61717"/>
        <label>3</label>
    </ligand>
    <ligandPart>
        <name>Fe</name>
        <dbReference type="ChEBI" id="CHEBI:18248"/>
    </ligandPart>
</feature>
<feature type="binding site" evidence="2">
    <location>
        <position position="93"/>
    </location>
    <ligand>
        <name>heme c</name>
        <dbReference type="ChEBI" id="CHEBI:61717"/>
        <label>1</label>
    </ligand>
</feature>
<feature type="binding site" description="axial binding residue" evidence="4 8">
    <location>
        <position position="94"/>
    </location>
    <ligand>
        <name>heme c</name>
        <dbReference type="ChEBI" id="CHEBI:61717"/>
        <label>1</label>
    </ligand>
    <ligandPart>
        <name>Fe</name>
        <dbReference type="ChEBI" id="CHEBI:18248"/>
    </ligandPart>
</feature>
<feature type="binding site" description="covalent" evidence="2">
    <location>
        <position position="101"/>
    </location>
    <ligand>
        <name>heme c</name>
        <dbReference type="ChEBI" id="CHEBI:61717"/>
        <label>4</label>
    </ligand>
</feature>
<feature type="binding site" description="covalent" evidence="2">
    <location>
        <position position="104"/>
    </location>
    <ligand>
        <name>heme c</name>
        <dbReference type="ChEBI" id="CHEBI:61717"/>
        <label>4</label>
    </ligand>
</feature>
<feature type="binding site" description="axial binding residue" evidence="4 8">
    <location>
        <position position="105"/>
    </location>
    <ligand>
        <name>heme c</name>
        <dbReference type="ChEBI" id="CHEBI:61717"/>
        <label>4</label>
    </ligand>
    <ligandPart>
        <name>Fe</name>
        <dbReference type="ChEBI" id="CHEBI:18248"/>
    </ligandPart>
</feature>
<feature type="binding site" evidence="4 8">
    <location>
        <position position="154"/>
    </location>
    <ligand>
        <name>FAD</name>
        <dbReference type="ChEBI" id="CHEBI:57692"/>
    </ligand>
</feature>
<feature type="binding site" evidence="4 8">
    <location>
        <position position="173"/>
    </location>
    <ligand>
        <name>FAD</name>
        <dbReference type="ChEBI" id="CHEBI:57692"/>
    </ligand>
</feature>
<feature type="binding site" evidence="4 8">
    <location>
        <position position="181"/>
    </location>
    <ligand>
        <name>FAD</name>
        <dbReference type="ChEBI" id="CHEBI:57692"/>
    </ligand>
</feature>
<feature type="binding site" evidence="4 8">
    <location>
        <position position="182"/>
    </location>
    <ligand>
        <name>FAD</name>
        <dbReference type="ChEBI" id="CHEBI:57692"/>
    </ligand>
</feature>
<feature type="binding site" evidence="4 8">
    <location>
        <position position="187"/>
    </location>
    <ligand>
        <name>FAD</name>
        <dbReference type="ChEBI" id="CHEBI:57692"/>
    </ligand>
</feature>
<feature type="binding site" evidence="2">
    <location>
        <position position="187"/>
    </location>
    <ligand>
        <name>fumarate</name>
        <dbReference type="ChEBI" id="CHEBI:29806"/>
    </ligand>
</feature>
<feature type="binding site" evidence="2">
    <location>
        <position position="187"/>
    </location>
    <ligand>
        <name>succinate</name>
        <dbReference type="ChEBI" id="CHEBI:30031"/>
    </ligand>
</feature>
<feature type="binding site" evidence="4 8">
    <location>
        <position position="188"/>
    </location>
    <ligand>
        <name>FAD</name>
        <dbReference type="ChEBI" id="CHEBI:57692"/>
    </ligand>
</feature>
<feature type="binding site" evidence="2">
    <location>
        <position position="218"/>
    </location>
    <ligand>
        <name>heme c</name>
        <dbReference type="ChEBI" id="CHEBI:61717"/>
        <label>2</label>
    </ligand>
</feature>
<feature type="binding site" evidence="4 8">
    <location>
        <position position="295"/>
    </location>
    <ligand>
        <name>FAD</name>
        <dbReference type="ChEBI" id="CHEBI:57692"/>
    </ligand>
</feature>
<feature type="binding site" evidence="4 8">
    <location>
        <position position="361"/>
    </location>
    <ligand>
        <name>FAD</name>
        <dbReference type="ChEBI" id="CHEBI:57692"/>
    </ligand>
</feature>
<feature type="binding site" evidence="2">
    <location>
        <position position="382"/>
    </location>
    <ligand>
        <name>succinate</name>
        <dbReference type="ChEBI" id="CHEBI:30031"/>
    </ligand>
</feature>
<feature type="binding site" evidence="2">
    <location>
        <position position="394"/>
    </location>
    <ligand>
        <name>fumarate</name>
        <dbReference type="ChEBI" id="CHEBI:29806"/>
    </ligand>
</feature>
<feature type="binding site" evidence="2">
    <location>
        <position position="394"/>
    </location>
    <ligand>
        <name>succinate</name>
        <dbReference type="ChEBI" id="CHEBI:30031"/>
    </ligand>
</feature>
<feature type="binding site" evidence="2">
    <location>
        <position position="395"/>
    </location>
    <ligand>
        <name>fumarate</name>
        <dbReference type="ChEBI" id="CHEBI:29806"/>
    </ligand>
</feature>
<feature type="binding site" evidence="2">
    <location>
        <position position="395"/>
    </location>
    <ligand>
        <name>succinate</name>
        <dbReference type="ChEBI" id="CHEBI:30031"/>
    </ligand>
</feature>
<feature type="binding site" evidence="2">
    <location>
        <position position="521"/>
    </location>
    <ligand>
        <name>fumarate</name>
        <dbReference type="ChEBI" id="CHEBI:29806"/>
    </ligand>
</feature>
<feature type="binding site" evidence="2">
    <location>
        <position position="521"/>
    </location>
    <ligand>
        <name>succinate</name>
        <dbReference type="ChEBI" id="CHEBI:30031"/>
    </ligand>
</feature>
<feature type="binding site" evidence="4 8">
    <location>
        <position position="551"/>
    </location>
    <ligand>
        <name>FAD</name>
        <dbReference type="ChEBI" id="CHEBI:57692"/>
    </ligand>
</feature>
<feature type="binding site" evidence="2">
    <location>
        <position position="561"/>
    </location>
    <ligand>
        <name>fumarate</name>
        <dbReference type="ChEBI" id="CHEBI:29806"/>
    </ligand>
</feature>
<feature type="binding site" evidence="2">
    <location>
        <position position="561"/>
    </location>
    <ligand>
        <name>succinate</name>
        <dbReference type="ChEBI" id="CHEBI:30031"/>
    </ligand>
</feature>
<feature type="binding site" evidence="4 8">
    <location>
        <position position="564"/>
    </location>
    <ligand>
        <name>FAD</name>
        <dbReference type="ChEBI" id="CHEBI:57692"/>
    </ligand>
</feature>
<feature type="binding site" evidence="2">
    <location>
        <position position="564"/>
    </location>
    <ligand>
        <name>fumarate</name>
        <dbReference type="ChEBI" id="CHEBI:29806"/>
    </ligand>
</feature>
<feature type="binding site" evidence="2">
    <location>
        <position position="564"/>
    </location>
    <ligand>
        <name>succinate</name>
        <dbReference type="ChEBI" id="CHEBI:30031"/>
    </ligand>
</feature>
<feature type="binding site" evidence="4 8">
    <location>
        <position position="566"/>
    </location>
    <ligand>
        <name>FAD</name>
        <dbReference type="ChEBI" id="CHEBI:57692"/>
    </ligand>
</feature>
<feature type="binding site" evidence="4 8">
    <location>
        <position position="567"/>
    </location>
    <ligand>
        <name>FAD</name>
        <dbReference type="ChEBI" id="CHEBI:57692"/>
    </ligand>
</feature>
<feature type="helix" evidence="9">
    <location>
        <begin position="27"/>
        <end position="34"/>
    </location>
</feature>
<feature type="helix" evidence="9">
    <location>
        <begin position="37"/>
        <end position="39"/>
    </location>
</feature>
<feature type="helix" evidence="9">
    <location>
        <begin position="52"/>
        <end position="62"/>
    </location>
</feature>
<feature type="helix" evidence="9">
    <location>
        <begin position="65"/>
        <end position="68"/>
    </location>
</feature>
<feature type="strand" evidence="9">
    <location>
        <begin position="71"/>
        <end position="75"/>
    </location>
</feature>
<feature type="helix" evidence="9">
    <location>
        <begin position="87"/>
        <end position="89"/>
    </location>
</feature>
<feature type="strand" evidence="9">
    <location>
        <begin position="93"/>
        <end position="95"/>
    </location>
</feature>
<feature type="helix" evidence="9">
    <location>
        <begin position="100"/>
        <end position="103"/>
    </location>
</feature>
<feature type="turn" evidence="9">
    <location>
        <begin position="113"/>
        <end position="116"/>
    </location>
</feature>
<feature type="helix" evidence="9">
    <location>
        <begin position="129"/>
        <end position="137"/>
    </location>
</feature>
<feature type="strand" evidence="9">
    <location>
        <begin position="141"/>
        <end position="149"/>
    </location>
</feature>
<feature type="helix" evidence="9">
    <location>
        <begin position="153"/>
        <end position="165"/>
    </location>
</feature>
<feature type="strand" evidence="9">
    <location>
        <begin position="169"/>
        <end position="172"/>
    </location>
</feature>
<feature type="strand" evidence="9">
    <location>
        <begin position="174"/>
        <end position="178"/>
    </location>
</feature>
<feature type="helix" evidence="9">
    <location>
        <begin position="182"/>
        <end position="184"/>
    </location>
</feature>
<feature type="helix" evidence="9">
    <location>
        <begin position="195"/>
        <end position="199"/>
    </location>
</feature>
<feature type="helix" evidence="9">
    <location>
        <begin position="206"/>
        <end position="216"/>
    </location>
</feature>
<feature type="turn" evidence="9">
    <location>
        <begin position="217"/>
        <end position="219"/>
    </location>
</feature>
<feature type="helix" evidence="9">
    <location>
        <begin position="223"/>
        <end position="242"/>
    </location>
</feature>
<feature type="strand" evidence="9">
    <location>
        <begin position="249"/>
        <end position="251"/>
    </location>
</feature>
<feature type="strand" evidence="9">
    <location>
        <begin position="261"/>
        <end position="263"/>
    </location>
</feature>
<feature type="strand" evidence="9">
    <location>
        <begin position="265"/>
        <end position="268"/>
    </location>
</feature>
<feature type="helix" evidence="9">
    <location>
        <begin position="270"/>
        <end position="284"/>
    </location>
</feature>
<feature type="strand" evidence="9">
    <location>
        <begin position="292"/>
        <end position="300"/>
    </location>
</feature>
<feature type="strand" evidence="9">
    <location>
        <begin position="304"/>
        <end position="313"/>
    </location>
</feature>
<feature type="turn" evidence="9">
    <location>
        <begin position="314"/>
        <end position="316"/>
    </location>
</feature>
<feature type="strand" evidence="9">
    <location>
        <begin position="317"/>
        <end position="328"/>
    </location>
</feature>
<feature type="helix" evidence="9">
    <location>
        <begin position="337"/>
        <end position="343"/>
    </location>
</feature>
<feature type="helix" evidence="9">
    <location>
        <begin position="345"/>
        <end position="347"/>
    </location>
</feature>
<feature type="helix" evidence="9">
    <location>
        <begin position="361"/>
        <end position="368"/>
    </location>
</feature>
<feature type="strand" evidence="9">
    <location>
        <begin position="373"/>
        <end position="375"/>
    </location>
</feature>
<feature type="strand" evidence="9">
    <location>
        <begin position="379"/>
        <end position="389"/>
    </location>
</feature>
<feature type="helix" evidence="9">
    <location>
        <begin position="396"/>
        <end position="399"/>
    </location>
</feature>
<feature type="strand" evidence="9">
    <location>
        <begin position="403"/>
        <end position="405"/>
    </location>
</feature>
<feature type="helix" evidence="9">
    <location>
        <begin position="419"/>
        <end position="427"/>
    </location>
</feature>
<feature type="helix" evidence="9">
    <location>
        <begin position="430"/>
        <end position="432"/>
    </location>
</feature>
<feature type="strand" evidence="9">
    <location>
        <begin position="434"/>
        <end position="439"/>
    </location>
</feature>
<feature type="helix" evidence="9">
    <location>
        <begin position="440"/>
        <end position="445"/>
    </location>
</feature>
<feature type="helix" evidence="9">
    <location>
        <begin position="447"/>
        <end position="454"/>
    </location>
</feature>
<feature type="strand" evidence="9">
    <location>
        <begin position="459"/>
        <end position="463"/>
    </location>
</feature>
<feature type="helix" evidence="9">
    <location>
        <begin position="464"/>
        <end position="470"/>
    </location>
</feature>
<feature type="helix" evidence="9">
    <location>
        <begin position="475"/>
        <end position="491"/>
    </location>
</feature>
<feature type="turn" evidence="9">
    <location>
        <begin position="495"/>
        <end position="497"/>
    </location>
</feature>
<feature type="strand" evidence="9">
    <location>
        <begin position="508"/>
        <end position="523"/>
    </location>
</feature>
<feature type="strand" evidence="9">
    <location>
        <begin position="534"/>
        <end position="537"/>
    </location>
</feature>
<feature type="strand" evidence="9">
    <location>
        <begin position="542"/>
        <end position="548"/>
    </location>
</feature>
<feature type="strand" evidence="9">
    <location>
        <begin position="555"/>
        <end position="557"/>
    </location>
</feature>
<feature type="helix" evidence="9">
    <location>
        <begin position="565"/>
        <end position="585"/>
    </location>
</feature>
<dbReference type="EC" id="1.3.2.-" evidence="7"/>
<dbReference type="EMBL" id="AJ236923">
    <property type="protein sequence ID" value="CAB37062.1"/>
    <property type="molecule type" value="Genomic_DNA"/>
</dbReference>
<dbReference type="EMBL" id="CP000447">
    <property type="protein sequence ID" value="ABI72427.1"/>
    <property type="molecule type" value="Genomic_DNA"/>
</dbReference>
<dbReference type="RefSeq" id="WP_011638036.1">
    <property type="nucleotide sequence ID" value="NC_008345.1"/>
</dbReference>
<dbReference type="PDB" id="1QO8">
    <property type="method" value="X-ray"/>
    <property type="resolution" value="2.15 A"/>
    <property type="chains" value="A/D=23-588"/>
</dbReference>
<dbReference type="PDBsum" id="1QO8"/>
<dbReference type="SMR" id="Q9Z4P0"/>
<dbReference type="STRING" id="318167.Sfri_2586"/>
<dbReference type="DrugBank" id="DB03147">
    <property type="generic name" value="Flavin adenine dinucleotide"/>
</dbReference>
<dbReference type="KEGG" id="sfr:Sfri_2586"/>
<dbReference type="eggNOG" id="COG1053">
    <property type="taxonomic scope" value="Bacteria"/>
</dbReference>
<dbReference type="HOGENOM" id="CLU_011398_4_5_6"/>
<dbReference type="OrthoDB" id="9148689at2"/>
<dbReference type="EvolutionaryTrace" id="Q9Z4P0"/>
<dbReference type="Proteomes" id="UP000000684">
    <property type="component" value="Chromosome"/>
</dbReference>
<dbReference type="GO" id="GO:0042597">
    <property type="term" value="C:periplasmic space"/>
    <property type="evidence" value="ECO:0007669"/>
    <property type="project" value="UniProtKB-SubCell"/>
</dbReference>
<dbReference type="GO" id="GO:0010181">
    <property type="term" value="F:FMN binding"/>
    <property type="evidence" value="ECO:0007669"/>
    <property type="project" value="InterPro"/>
</dbReference>
<dbReference type="GO" id="GO:0046872">
    <property type="term" value="F:metal ion binding"/>
    <property type="evidence" value="ECO:0007669"/>
    <property type="project" value="UniProtKB-KW"/>
</dbReference>
<dbReference type="GO" id="GO:0016491">
    <property type="term" value="F:oxidoreductase activity"/>
    <property type="evidence" value="ECO:0007669"/>
    <property type="project" value="UniProtKB-KW"/>
</dbReference>
<dbReference type="CDD" id="cd02440">
    <property type="entry name" value="AdoMet_MTases"/>
    <property type="match status" value="1"/>
</dbReference>
<dbReference type="CDD" id="cd08168">
    <property type="entry name" value="Cytochrom_C3"/>
    <property type="match status" value="1"/>
</dbReference>
<dbReference type="FunFam" id="1.10.1130.10:FF:000003">
    <property type="entry name" value="Fumarate reductase flavoprotein subunit"/>
    <property type="match status" value="1"/>
</dbReference>
<dbReference type="FunFam" id="3.90.700.10:FF:000007">
    <property type="entry name" value="NADH-dependent fumarate reductase"/>
    <property type="match status" value="1"/>
</dbReference>
<dbReference type="Gene3D" id="3.50.50.60">
    <property type="entry name" value="FAD/NAD(P)-binding domain"/>
    <property type="match status" value="1"/>
</dbReference>
<dbReference type="Gene3D" id="1.10.1130.10">
    <property type="entry name" value="Flavocytochrome C3, Chain A"/>
    <property type="match status" value="1"/>
</dbReference>
<dbReference type="Gene3D" id="3.90.700.10">
    <property type="entry name" value="Succinate dehydrogenase/fumarate reductase flavoprotein, catalytic domain"/>
    <property type="match status" value="1"/>
</dbReference>
<dbReference type="InterPro" id="IPR003953">
    <property type="entry name" value="FAD-dep_OxRdtase_2_FAD-bd"/>
</dbReference>
<dbReference type="InterPro" id="IPR050315">
    <property type="entry name" value="FAD-oxidoreductase_2"/>
</dbReference>
<dbReference type="InterPro" id="IPR036188">
    <property type="entry name" value="FAD/NAD-bd_sf"/>
</dbReference>
<dbReference type="InterPro" id="IPR010960">
    <property type="entry name" value="Flavocytochrome_c"/>
</dbReference>
<dbReference type="InterPro" id="IPR036280">
    <property type="entry name" value="Multihaem_cyt_sf"/>
</dbReference>
<dbReference type="InterPro" id="IPR027477">
    <property type="entry name" value="Succ_DH/fumarate_Rdtase_cat_sf"/>
</dbReference>
<dbReference type="InterPro" id="IPR012286">
    <property type="entry name" value="Tetrahaem_cytochrome"/>
</dbReference>
<dbReference type="NCBIfam" id="TIGR01813">
    <property type="entry name" value="flavo_cyto_c"/>
    <property type="match status" value="1"/>
</dbReference>
<dbReference type="PANTHER" id="PTHR43400:SF7">
    <property type="entry name" value="FAD-DEPENDENT OXIDOREDUCTASE 2 FAD BINDING DOMAIN-CONTAINING PROTEIN"/>
    <property type="match status" value="1"/>
</dbReference>
<dbReference type="PANTHER" id="PTHR43400">
    <property type="entry name" value="FUMARATE REDUCTASE"/>
    <property type="match status" value="1"/>
</dbReference>
<dbReference type="Pfam" id="PF14537">
    <property type="entry name" value="Cytochrom_c3_2"/>
    <property type="match status" value="1"/>
</dbReference>
<dbReference type="Pfam" id="PF00890">
    <property type="entry name" value="FAD_binding_2"/>
    <property type="match status" value="1"/>
</dbReference>
<dbReference type="PRINTS" id="PR00368">
    <property type="entry name" value="FADPNR"/>
</dbReference>
<dbReference type="SUPFAM" id="SSF51905">
    <property type="entry name" value="FAD/NAD(P)-binding domain"/>
    <property type="match status" value="1"/>
</dbReference>
<dbReference type="SUPFAM" id="SSF48695">
    <property type="entry name" value="Multiheme cytochromes"/>
    <property type="match status" value="1"/>
</dbReference>
<dbReference type="SUPFAM" id="SSF56425">
    <property type="entry name" value="Succinate dehydrogenase/fumarate reductase flavoprotein, catalytic domain"/>
    <property type="match status" value="1"/>
</dbReference>
<dbReference type="PROSITE" id="PS51008">
    <property type="entry name" value="MULTIHEME_CYTC"/>
    <property type="match status" value="1"/>
</dbReference>
<accession>Q9Z4P0</accession>
<accession>Q07ZY8</accession>
<evidence type="ECO:0000250" key="1">
    <source>
        <dbReference type="UniProtKB" id="P0C278"/>
    </source>
</evidence>
<evidence type="ECO:0000250" key="2">
    <source>
        <dbReference type="UniProtKB" id="P83223"/>
    </source>
</evidence>
<evidence type="ECO:0000269" key="3">
    <source>
    </source>
</evidence>
<evidence type="ECO:0000269" key="4">
    <source>
    </source>
</evidence>
<evidence type="ECO:0000303" key="5">
    <source>
    </source>
</evidence>
<evidence type="ECO:0000305" key="6"/>
<evidence type="ECO:0000305" key="7">
    <source>
    </source>
</evidence>
<evidence type="ECO:0007744" key="8">
    <source>
        <dbReference type="PDB" id="1QO8"/>
    </source>
</evidence>
<evidence type="ECO:0007829" key="9">
    <source>
        <dbReference type="PDB" id="1QO8"/>
    </source>
</evidence>
<organism>
    <name type="scientific">Shewanella frigidimarina (strain NCIMB 400)</name>
    <dbReference type="NCBI Taxonomy" id="318167"/>
    <lineage>
        <taxon>Bacteria</taxon>
        <taxon>Pseudomonadati</taxon>
        <taxon>Pseudomonadota</taxon>
        <taxon>Gammaproteobacteria</taxon>
        <taxon>Alteromonadales</taxon>
        <taxon>Shewanellaceae</taxon>
        <taxon>Shewanella</taxon>
    </lineage>
</organism>
<proteinExistence type="evidence at protein level"/>
<comment type="function">
    <text evidence="3">Flavocytochrome that catalyzes the reduction of fumarate to succinate in vitro (PubMed:10455032). Is essentially unidirectional, catalyzing only fumarate reduction (PubMed:10455032). In vitro, can use the artificial electron donor methyl viologen (PubMed:10455032). May be involved in an alternative route for electron transport to Fe(3+) (PubMed:10455032).</text>
</comment>
<comment type="cofactor">
    <cofactor evidence="3 4">
        <name>FAD</name>
        <dbReference type="ChEBI" id="CHEBI:57692"/>
    </cofactor>
    <text evidence="3 4">Binds 1 FAD per subunit.</text>
</comment>
<comment type="cofactor">
    <cofactor evidence="3 4">
        <name>heme c</name>
        <dbReference type="ChEBI" id="CHEBI:61717"/>
    </cofactor>
    <text evidence="3 4">Binds 4 heme c groups covalently per monomer.</text>
</comment>
<comment type="subunit">
    <text evidence="4">Homodimer.</text>
</comment>
<comment type="subcellular location">
    <subcellularLocation>
        <location evidence="3">Periplasm</location>
    </subcellularLocation>
</comment>
<comment type="induction">
    <text evidence="3">By anaerobic growth on Fe(3+) ions (PubMed:10455032). Not expressed in cells cultured either anaerobically with other soluble respiratory substrates or microaerobically (PubMed:10455032).</text>
</comment>
<comment type="mass spectrometry" mass="63985.0" error="0.1" method="MALDI" evidence="3"/>
<comment type="similarity">
    <text evidence="6">In the C-terminal section; belongs to the FAD-dependent oxidoreductase 2 family. FRD/SDH subfamily.</text>
</comment>
<reference key="1">
    <citation type="journal article" date="1999" name="Biochem. J.">
        <title>Characterization of a flavocytochrome that is induced during the anaerobic respiration of Fe3+ by Shewanella frigidimarina NCIMB400.</title>
        <authorList>
            <person name="Dobbin P.S."/>
            <person name="Butt J.N."/>
            <person name="Powell A.K."/>
            <person name="Reid G.A."/>
            <person name="Richardson D.J."/>
        </authorList>
    </citation>
    <scope>NUCLEOTIDE SEQUENCE [GENOMIC DNA]</scope>
    <scope>PROTEIN SEQUENCE OF 23-32; 190-199 AND 215-229</scope>
    <scope>FUNCTION</scope>
    <scope>COFACTOR</scope>
    <scope>SUBCELLULAR LOCATION</scope>
    <scope>INDUCTION</scope>
    <scope>MASS SPECTROMETRY</scope>
    <source>
        <strain>NCIMB 400</strain>
    </source>
</reference>
<reference key="2">
    <citation type="submission" date="2006-08" db="EMBL/GenBank/DDBJ databases">
        <title>Complete sequence of Shewanella frigidimarina NCIMB 400.</title>
        <authorList>
            <consortium name="US DOE Joint Genome Institute"/>
            <person name="Copeland A."/>
            <person name="Lucas S."/>
            <person name="Lapidus A."/>
            <person name="Barry K."/>
            <person name="Detter J.C."/>
            <person name="Glavina del Rio T."/>
            <person name="Hammon N."/>
            <person name="Israni S."/>
            <person name="Dalin E."/>
            <person name="Tice H."/>
            <person name="Pitluck S."/>
            <person name="Fredrickson J.K."/>
            <person name="Kolker E."/>
            <person name="McCuel L.A."/>
            <person name="DiChristina T."/>
            <person name="Nealson K.H."/>
            <person name="Newman D."/>
            <person name="Tiedje J.M."/>
            <person name="Zhou J."/>
            <person name="Romine M.F."/>
            <person name="Culley D.E."/>
            <person name="Serres M."/>
            <person name="Chertkov O."/>
            <person name="Brettin T."/>
            <person name="Bruce D."/>
            <person name="Han C."/>
            <person name="Tapia R."/>
            <person name="Gilna P."/>
            <person name="Schmutz J."/>
            <person name="Larimer F."/>
            <person name="Land M."/>
            <person name="Hauser L."/>
            <person name="Kyrpides N."/>
            <person name="Mikhailova N."/>
            <person name="Richardson P."/>
        </authorList>
    </citation>
    <scope>NUCLEOTIDE SEQUENCE [LARGE SCALE GENOMIC DNA]</scope>
    <source>
        <strain>NCIMB 400</strain>
    </source>
</reference>
<reference evidence="8" key="3">
    <citation type="journal article" date="1999" name="Nat. Struct. Biol.">
        <title>Open conformation of a flavocytochrome c3 fumarate reductase.</title>
        <authorList>
            <person name="Bamford V."/>
            <person name="Dobbin P.S."/>
            <person name="Richardson D.J."/>
            <person name="Hemmings A.M."/>
        </authorList>
    </citation>
    <scope>X-RAY CRYSTALLOGRAPHY (2.15 ANGSTROMS) OF 23-588 IN COMPLEX WITH FAD AND HEME</scope>
    <scope>COFACTOR</scope>
    <scope>SUBUNIT</scope>
</reference>